<sequence length="156" mass="16245">MKLNDLRDKPGSVKARKRVGRGIGSGTGKTGGRGVKGQKSRSGVSINGFEGGQMPIYRRLPKRGFTNIFAKSFNVVSLGRIQAAIDAGKLDAKAVVNLDSLKAAGVIRRAKDGVRILSDGELKAKVAFEVAGASKAAVEKIEKAGGSIKLPEAAAE</sequence>
<reference key="1">
    <citation type="journal article" date="2009" name="PLoS ONE">
        <title>Genome degradation in Brucella ovis corresponds with narrowing of its host range and tissue tropism.</title>
        <authorList>
            <person name="Tsolis R.M."/>
            <person name="Seshadri R."/>
            <person name="Santos R.L."/>
            <person name="Sangari F.J."/>
            <person name="Lobo J.M."/>
            <person name="de Jong M.F."/>
            <person name="Ren Q."/>
            <person name="Myers G."/>
            <person name="Brinkac L.M."/>
            <person name="Nelson W.C."/>
            <person name="Deboy R.T."/>
            <person name="Angiuoli S."/>
            <person name="Khouri H."/>
            <person name="Dimitrov G."/>
            <person name="Robinson J.R."/>
            <person name="Mulligan S."/>
            <person name="Walker R.L."/>
            <person name="Elzer P.E."/>
            <person name="Hassan K.A."/>
            <person name="Paulsen I.T."/>
        </authorList>
    </citation>
    <scope>NUCLEOTIDE SEQUENCE [LARGE SCALE GENOMIC DNA]</scope>
    <source>
        <strain>ATCC 25840 / 63/290 / NCTC 10512</strain>
    </source>
</reference>
<organism>
    <name type="scientific">Brucella ovis (strain ATCC 25840 / 63/290 / NCTC 10512)</name>
    <dbReference type="NCBI Taxonomy" id="444178"/>
    <lineage>
        <taxon>Bacteria</taxon>
        <taxon>Pseudomonadati</taxon>
        <taxon>Pseudomonadota</taxon>
        <taxon>Alphaproteobacteria</taxon>
        <taxon>Hyphomicrobiales</taxon>
        <taxon>Brucellaceae</taxon>
        <taxon>Brucella/Ochrobactrum group</taxon>
        <taxon>Brucella</taxon>
    </lineage>
</organism>
<protein>
    <recommendedName>
        <fullName evidence="1">Large ribosomal subunit protein uL15</fullName>
    </recommendedName>
    <alternativeName>
        <fullName evidence="3">50S ribosomal protein L15</fullName>
    </alternativeName>
</protein>
<keyword id="KW-0687">Ribonucleoprotein</keyword>
<keyword id="KW-0689">Ribosomal protein</keyword>
<keyword id="KW-0694">RNA-binding</keyword>
<keyword id="KW-0699">rRNA-binding</keyword>
<evidence type="ECO:0000255" key="1">
    <source>
        <dbReference type="HAMAP-Rule" id="MF_01341"/>
    </source>
</evidence>
<evidence type="ECO:0000256" key="2">
    <source>
        <dbReference type="SAM" id="MobiDB-lite"/>
    </source>
</evidence>
<evidence type="ECO:0000305" key="3"/>
<dbReference type="EMBL" id="CP000708">
    <property type="protein sequence ID" value="ABQ61813.1"/>
    <property type="molecule type" value="Genomic_DNA"/>
</dbReference>
<dbReference type="RefSeq" id="WP_002964343.1">
    <property type="nucleotide sequence ID" value="NC_009505.1"/>
</dbReference>
<dbReference type="SMR" id="A5VQY7"/>
<dbReference type="GeneID" id="97533543"/>
<dbReference type="KEGG" id="bov:BOV_1177"/>
<dbReference type="HOGENOM" id="CLU_055188_4_0_5"/>
<dbReference type="PhylomeDB" id="A5VQY7"/>
<dbReference type="Proteomes" id="UP000006383">
    <property type="component" value="Chromosome I"/>
</dbReference>
<dbReference type="GO" id="GO:0022625">
    <property type="term" value="C:cytosolic large ribosomal subunit"/>
    <property type="evidence" value="ECO:0007669"/>
    <property type="project" value="TreeGrafter"/>
</dbReference>
<dbReference type="GO" id="GO:0019843">
    <property type="term" value="F:rRNA binding"/>
    <property type="evidence" value="ECO:0007669"/>
    <property type="project" value="UniProtKB-UniRule"/>
</dbReference>
<dbReference type="GO" id="GO:0003735">
    <property type="term" value="F:structural constituent of ribosome"/>
    <property type="evidence" value="ECO:0007669"/>
    <property type="project" value="InterPro"/>
</dbReference>
<dbReference type="GO" id="GO:0006412">
    <property type="term" value="P:translation"/>
    <property type="evidence" value="ECO:0007669"/>
    <property type="project" value="UniProtKB-UniRule"/>
</dbReference>
<dbReference type="Gene3D" id="3.100.10.10">
    <property type="match status" value="1"/>
</dbReference>
<dbReference type="HAMAP" id="MF_01341">
    <property type="entry name" value="Ribosomal_uL15"/>
    <property type="match status" value="1"/>
</dbReference>
<dbReference type="InterPro" id="IPR030878">
    <property type="entry name" value="Ribosomal_uL15"/>
</dbReference>
<dbReference type="InterPro" id="IPR021131">
    <property type="entry name" value="Ribosomal_uL15/eL18"/>
</dbReference>
<dbReference type="InterPro" id="IPR036227">
    <property type="entry name" value="Ribosomal_uL15/eL18_sf"/>
</dbReference>
<dbReference type="InterPro" id="IPR005749">
    <property type="entry name" value="Ribosomal_uL15_bac-type"/>
</dbReference>
<dbReference type="InterPro" id="IPR001196">
    <property type="entry name" value="Ribosomal_uL15_CS"/>
</dbReference>
<dbReference type="NCBIfam" id="TIGR01071">
    <property type="entry name" value="rplO_bact"/>
    <property type="match status" value="1"/>
</dbReference>
<dbReference type="PANTHER" id="PTHR12934">
    <property type="entry name" value="50S RIBOSOMAL PROTEIN L15"/>
    <property type="match status" value="1"/>
</dbReference>
<dbReference type="PANTHER" id="PTHR12934:SF11">
    <property type="entry name" value="LARGE RIBOSOMAL SUBUNIT PROTEIN UL15M"/>
    <property type="match status" value="1"/>
</dbReference>
<dbReference type="Pfam" id="PF00828">
    <property type="entry name" value="Ribosomal_L27A"/>
    <property type="match status" value="1"/>
</dbReference>
<dbReference type="SUPFAM" id="SSF52080">
    <property type="entry name" value="Ribosomal proteins L15p and L18e"/>
    <property type="match status" value="1"/>
</dbReference>
<dbReference type="PROSITE" id="PS00475">
    <property type="entry name" value="RIBOSOMAL_L15"/>
    <property type="match status" value="1"/>
</dbReference>
<accession>A5VQY7</accession>
<comment type="function">
    <text evidence="1">Binds to the 23S rRNA.</text>
</comment>
<comment type="subunit">
    <text evidence="1">Part of the 50S ribosomal subunit.</text>
</comment>
<comment type="similarity">
    <text evidence="1">Belongs to the universal ribosomal protein uL15 family.</text>
</comment>
<gene>
    <name evidence="1" type="primary">rplO</name>
    <name type="ordered locus">BOV_1177</name>
</gene>
<feature type="chain" id="PRO_1000054433" description="Large ribosomal subunit protein uL15">
    <location>
        <begin position="1"/>
        <end position="156"/>
    </location>
</feature>
<feature type="region of interest" description="Disordered" evidence="2">
    <location>
        <begin position="1"/>
        <end position="44"/>
    </location>
</feature>
<feature type="compositionally biased region" description="Basic and acidic residues" evidence="2">
    <location>
        <begin position="1"/>
        <end position="11"/>
    </location>
</feature>
<feature type="compositionally biased region" description="Gly residues" evidence="2">
    <location>
        <begin position="21"/>
        <end position="35"/>
    </location>
</feature>
<name>RL15_BRUO2</name>
<proteinExistence type="inferred from homology"/>